<organism>
    <name type="scientific">Xanthomonas euvesicatoria pv. vesicatoria (strain 85-10)</name>
    <name type="common">Xanthomonas campestris pv. vesicatoria</name>
    <dbReference type="NCBI Taxonomy" id="316273"/>
    <lineage>
        <taxon>Bacteria</taxon>
        <taxon>Pseudomonadati</taxon>
        <taxon>Pseudomonadota</taxon>
        <taxon>Gammaproteobacteria</taxon>
        <taxon>Lysobacterales</taxon>
        <taxon>Lysobacteraceae</taxon>
        <taxon>Xanthomonas</taxon>
    </lineage>
</organism>
<feature type="chain" id="PRO_0000265202" description="RNA-binding protein Hfq">
    <location>
        <begin position="1"/>
        <end position="92"/>
    </location>
</feature>
<feature type="domain" description="Sm" evidence="2">
    <location>
        <begin position="9"/>
        <end position="68"/>
    </location>
</feature>
<feature type="region of interest" description="Disordered" evidence="3">
    <location>
        <begin position="73"/>
        <end position="92"/>
    </location>
</feature>
<dbReference type="EMBL" id="AM039952">
    <property type="protein sequence ID" value="CAJ23445.1"/>
    <property type="molecule type" value="Genomic_DNA"/>
</dbReference>
<dbReference type="RefSeq" id="WP_005915027.1">
    <property type="nucleotide sequence ID" value="NZ_CP017190.1"/>
</dbReference>
<dbReference type="SMR" id="Q3BUR4"/>
<dbReference type="STRING" id="456327.BJD11_13705"/>
<dbReference type="GeneID" id="97510110"/>
<dbReference type="KEGG" id="xcv:XCV1768"/>
<dbReference type="eggNOG" id="COG1923">
    <property type="taxonomic scope" value="Bacteria"/>
</dbReference>
<dbReference type="HOGENOM" id="CLU_113688_2_0_6"/>
<dbReference type="Proteomes" id="UP000007069">
    <property type="component" value="Chromosome"/>
</dbReference>
<dbReference type="GO" id="GO:0005829">
    <property type="term" value="C:cytosol"/>
    <property type="evidence" value="ECO:0007669"/>
    <property type="project" value="TreeGrafter"/>
</dbReference>
<dbReference type="GO" id="GO:0003723">
    <property type="term" value="F:RNA binding"/>
    <property type="evidence" value="ECO:0007669"/>
    <property type="project" value="UniProtKB-UniRule"/>
</dbReference>
<dbReference type="GO" id="GO:0006355">
    <property type="term" value="P:regulation of DNA-templated transcription"/>
    <property type="evidence" value="ECO:0007669"/>
    <property type="project" value="InterPro"/>
</dbReference>
<dbReference type="GO" id="GO:0043487">
    <property type="term" value="P:regulation of RNA stability"/>
    <property type="evidence" value="ECO:0007669"/>
    <property type="project" value="TreeGrafter"/>
</dbReference>
<dbReference type="GO" id="GO:0045974">
    <property type="term" value="P:regulation of translation, ncRNA-mediated"/>
    <property type="evidence" value="ECO:0007669"/>
    <property type="project" value="TreeGrafter"/>
</dbReference>
<dbReference type="CDD" id="cd01716">
    <property type="entry name" value="Hfq"/>
    <property type="match status" value="1"/>
</dbReference>
<dbReference type="FunFam" id="2.30.30.100:FF:000001">
    <property type="entry name" value="RNA-binding protein Hfq"/>
    <property type="match status" value="1"/>
</dbReference>
<dbReference type="Gene3D" id="2.30.30.100">
    <property type="match status" value="1"/>
</dbReference>
<dbReference type="HAMAP" id="MF_00436">
    <property type="entry name" value="Hfq"/>
    <property type="match status" value="1"/>
</dbReference>
<dbReference type="InterPro" id="IPR005001">
    <property type="entry name" value="Hfq"/>
</dbReference>
<dbReference type="InterPro" id="IPR010920">
    <property type="entry name" value="LSM_dom_sf"/>
</dbReference>
<dbReference type="InterPro" id="IPR047575">
    <property type="entry name" value="Sm"/>
</dbReference>
<dbReference type="NCBIfam" id="TIGR02383">
    <property type="entry name" value="Hfq"/>
    <property type="match status" value="1"/>
</dbReference>
<dbReference type="NCBIfam" id="NF001602">
    <property type="entry name" value="PRK00395.1"/>
    <property type="match status" value="1"/>
</dbReference>
<dbReference type="PANTHER" id="PTHR34772">
    <property type="entry name" value="RNA-BINDING PROTEIN HFQ"/>
    <property type="match status" value="1"/>
</dbReference>
<dbReference type="PANTHER" id="PTHR34772:SF1">
    <property type="entry name" value="RNA-BINDING PROTEIN HFQ"/>
    <property type="match status" value="1"/>
</dbReference>
<dbReference type="Pfam" id="PF17209">
    <property type="entry name" value="Hfq"/>
    <property type="match status" value="1"/>
</dbReference>
<dbReference type="SUPFAM" id="SSF50182">
    <property type="entry name" value="Sm-like ribonucleoproteins"/>
    <property type="match status" value="1"/>
</dbReference>
<dbReference type="PROSITE" id="PS52002">
    <property type="entry name" value="SM"/>
    <property type="match status" value="1"/>
</dbReference>
<proteinExistence type="inferred from homology"/>
<accession>Q3BUR4</accession>
<reference key="1">
    <citation type="journal article" date="2005" name="J. Bacteriol.">
        <title>Insights into genome plasticity and pathogenicity of the plant pathogenic Bacterium Xanthomonas campestris pv. vesicatoria revealed by the complete genome sequence.</title>
        <authorList>
            <person name="Thieme F."/>
            <person name="Koebnik R."/>
            <person name="Bekel T."/>
            <person name="Berger C."/>
            <person name="Boch J."/>
            <person name="Buettner D."/>
            <person name="Caldana C."/>
            <person name="Gaigalat L."/>
            <person name="Goesmann A."/>
            <person name="Kay S."/>
            <person name="Kirchner O."/>
            <person name="Lanz C."/>
            <person name="Linke B."/>
            <person name="McHardy A.C."/>
            <person name="Meyer F."/>
            <person name="Mittenhuber G."/>
            <person name="Nies D.H."/>
            <person name="Niesbach-Kloesgen U."/>
            <person name="Patschkowski T."/>
            <person name="Rueckert C."/>
            <person name="Rupp O."/>
            <person name="Schneiker S."/>
            <person name="Schuster S.C."/>
            <person name="Vorhoelter F.J."/>
            <person name="Weber E."/>
            <person name="Puehler A."/>
            <person name="Bonas U."/>
            <person name="Bartels D."/>
            <person name="Kaiser O."/>
        </authorList>
    </citation>
    <scope>NUCLEOTIDE SEQUENCE [LARGE SCALE GENOMIC DNA]</scope>
    <source>
        <strain>85-10</strain>
    </source>
</reference>
<gene>
    <name evidence="1" type="primary">hfq</name>
    <name type="ordered locus">XCV1768</name>
</gene>
<protein>
    <recommendedName>
        <fullName evidence="1">RNA-binding protein Hfq</fullName>
    </recommendedName>
</protein>
<name>HFQ_XANE5</name>
<keyword id="KW-0694">RNA-binding</keyword>
<keyword id="KW-0346">Stress response</keyword>
<sequence>MAKGQSLQDPFLNALRRERVPVSVYLVNGIKLQGTIESFDQFVVLLRNTVSQMVYKHAISTVVPARNVRVGPGGGYVQSNEGNQAEDDDVEQ</sequence>
<evidence type="ECO:0000255" key="1">
    <source>
        <dbReference type="HAMAP-Rule" id="MF_00436"/>
    </source>
</evidence>
<evidence type="ECO:0000255" key="2">
    <source>
        <dbReference type="PROSITE-ProRule" id="PRU01346"/>
    </source>
</evidence>
<evidence type="ECO:0000256" key="3">
    <source>
        <dbReference type="SAM" id="MobiDB-lite"/>
    </source>
</evidence>
<comment type="function">
    <text evidence="1">RNA chaperone that binds small regulatory RNA (sRNAs) and mRNAs to facilitate mRNA translational regulation in response to envelope stress, environmental stress and changes in metabolite concentrations. Also binds with high specificity to tRNAs.</text>
</comment>
<comment type="subunit">
    <text evidence="1">Homohexamer.</text>
</comment>
<comment type="similarity">
    <text evidence="1">Belongs to the Hfq family.</text>
</comment>